<accession>Q035V5</accession>
<evidence type="ECO:0000255" key="1">
    <source>
        <dbReference type="HAMAP-Rule" id="MF_00362"/>
    </source>
</evidence>
<evidence type="ECO:0000305" key="2"/>
<reference key="1">
    <citation type="journal article" date="2006" name="Proc. Natl. Acad. Sci. U.S.A.">
        <title>Comparative genomics of the lactic acid bacteria.</title>
        <authorList>
            <person name="Makarova K.S."/>
            <person name="Slesarev A."/>
            <person name="Wolf Y.I."/>
            <person name="Sorokin A."/>
            <person name="Mirkin B."/>
            <person name="Koonin E.V."/>
            <person name="Pavlov A."/>
            <person name="Pavlova N."/>
            <person name="Karamychev V."/>
            <person name="Polouchine N."/>
            <person name="Shakhova V."/>
            <person name="Grigoriev I."/>
            <person name="Lou Y."/>
            <person name="Rohksar D."/>
            <person name="Lucas S."/>
            <person name="Huang K."/>
            <person name="Goodstein D.M."/>
            <person name="Hawkins T."/>
            <person name="Plengvidhya V."/>
            <person name="Welker D."/>
            <person name="Hughes J."/>
            <person name="Goh Y."/>
            <person name="Benson A."/>
            <person name="Baldwin K."/>
            <person name="Lee J.-H."/>
            <person name="Diaz-Muniz I."/>
            <person name="Dosti B."/>
            <person name="Smeianov V."/>
            <person name="Wechter W."/>
            <person name="Barabote R."/>
            <person name="Lorca G."/>
            <person name="Altermann E."/>
            <person name="Barrangou R."/>
            <person name="Ganesan B."/>
            <person name="Xie Y."/>
            <person name="Rawsthorne H."/>
            <person name="Tamir D."/>
            <person name="Parker C."/>
            <person name="Breidt F."/>
            <person name="Broadbent J.R."/>
            <person name="Hutkins R."/>
            <person name="O'Sullivan D."/>
            <person name="Steele J."/>
            <person name="Unlu G."/>
            <person name="Saier M.H. Jr."/>
            <person name="Klaenhammer T."/>
            <person name="Richardson P."/>
            <person name="Kozyavkin S."/>
            <person name="Weimer B.C."/>
            <person name="Mills D.A."/>
        </authorList>
    </citation>
    <scope>NUCLEOTIDE SEQUENCE [LARGE SCALE GENOMIC DNA]</scope>
    <source>
        <strain>ATCC 334 / BCRC 17002 / CCUG 31169 / CIP 107868 / KCTC 3260 / NRRL B-441</strain>
    </source>
</reference>
<protein>
    <recommendedName>
        <fullName evidence="1">Large ribosomal subunit protein uL10</fullName>
    </recommendedName>
    <alternativeName>
        <fullName evidence="2">50S ribosomal protein L10</fullName>
    </alternativeName>
</protein>
<gene>
    <name evidence="1" type="primary">rplJ</name>
    <name type="ordered locus">LSEI_2273</name>
</gene>
<sequence length="168" mass="18177">MSEQAIAKKAEIVKSISEQFKSATSAVVVDYLGLTVEQVTALRKELREAGVKMEVLKNTYLRRAADANGYEALDDVFKGPTAVAFSNDDPVAPARIMAKYADQFDALKIKGGIIENKVASLDTIMEMSKMPDREGLLSQLASVLQAPVRDFALVVKAVAEAKDEEPAA</sequence>
<feature type="chain" id="PRO_1000005517" description="Large ribosomal subunit protein uL10">
    <location>
        <begin position="1"/>
        <end position="168"/>
    </location>
</feature>
<organism>
    <name type="scientific">Lacticaseibacillus paracasei (strain ATCC 334 / BCRC 17002 / CCUG 31169 / CIP 107868 / KCTC 3260 / NRRL B-441)</name>
    <name type="common">Lactobacillus paracasei</name>
    <dbReference type="NCBI Taxonomy" id="321967"/>
    <lineage>
        <taxon>Bacteria</taxon>
        <taxon>Bacillati</taxon>
        <taxon>Bacillota</taxon>
        <taxon>Bacilli</taxon>
        <taxon>Lactobacillales</taxon>
        <taxon>Lactobacillaceae</taxon>
        <taxon>Lacticaseibacillus</taxon>
    </lineage>
</organism>
<proteinExistence type="inferred from homology"/>
<dbReference type="EMBL" id="CP000423">
    <property type="protein sequence ID" value="ABJ71017.1"/>
    <property type="molecule type" value="Genomic_DNA"/>
</dbReference>
<dbReference type="RefSeq" id="WP_003567140.1">
    <property type="nucleotide sequence ID" value="NC_008526.1"/>
</dbReference>
<dbReference type="RefSeq" id="YP_807459.1">
    <property type="nucleotide sequence ID" value="NC_008526.1"/>
</dbReference>
<dbReference type="SMR" id="Q035V5"/>
<dbReference type="STRING" id="321967.LSEI_2273"/>
<dbReference type="PaxDb" id="321967-LSEI_2273"/>
<dbReference type="GeneID" id="57090884"/>
<dbReference type="KEGG" id="lca:LSEI_2273"/>
<dbReference type="PATRIC" id="fig|321967.11.peg.2236"/>
<dbReference type="HOGENOM" id="CLU_092227_2_0_9"/>
<dbReference type="Proteomes" id="UP000001651">
    <property type="component" value="Chromosome"/>
</dbReference>
<dbReference type="GO" id="GO:0015934">
    <property type="term" value="C:large ribosomal subunit"/>
    <property type="evidence" value="ECO:0007669"/>
    <property type="project" value="InterPro"/>
</dbReference>
<dbReference type="GO" id="GO:0070180">
    <property type="term" value="F:large ribosomal subunit rRNA binding"/>
    <property type="evidence" value="ECO:0007669"/>
    <property type="project" value="UniProtKB-UniRule"/>
</dbReference>
<dbReference type="GO" id="GO:0003735">
    <property type="term" value="F:structural constituent of ribosome"/>
    <property type="evidence" value="ECO:0007669"/>
    <property type="project" value="InterPro"/>
</dbReference>
<dbReference type="GO" id="GO:0006412">
    <property type="term" value="P:translation"/>
    <property type="evidence" value="ECO:0007669"/>
    <property type="project" value="UniProtKB-UniRule"/>
</dbReference>
<dbReference type="CDD" id="cd05797">
    <property type="entry name" value="Ribosomal_L10"/>
    <property type="match status" value="1"/>
</dbReference>
<dbReference type="Gene3D" id="3.30.70.1730">
    <property type="match status" value="1"/>
</dbReference>
<dbReference type="HAMAP" id="MF_00362">
    <property type="entry name" value="Ribosomal_uL10"/>
    <property type="match status" value="1"/>
</dbReference>
<dbReference type="InterPro" id="IPR001790">
    <property type="entry name" value="Ribosomal_uL10"/>
</dbReference>
<dbReference type="InterPro" id="IPR043141">
    <property type="entry name" value="Ribosomal_uL10-like_sf"/>
</dbReference>
<dbReference type="InterPro" id="IPR022973">
    <property type="entry name" value="Ribosomal_uL10_bac"/>
</dbReference>
<dbReference type="InterPro" id="IPR047865">
    <property type="entry name" value="Ribosomal_uL10_bac_type"/>
</dbReference>
<dbReference type="InterPro" id="IPR002363">
    <property type="entry name" value="Ribosomal_uL10_CS_bac"/>
</dbReference>
<dbReference type="NCBIfam" id="NF000955">
    <property type="entry name" value="PRK00099.1-1"/>
    <property type="match status" value="1"/>
</dbReference>
<dbReference type="PANTHER" id="PTHR11560">
    <property type="entry name" value="39S RIBOSOMAL PROTEIN L10, MITOCHONDRIAL"/>
    <property type="match status" value="1"/>
</dbReference>
<dbReference type="Pfam" id="PF00466">
    <property type="entry name" value="Ribosomal_L10"/>
    <property type="match status" value="1"/>
</dbReference>
<dbReference type="SUPFAM" id="SSF160369">
    <property type="entry name" value="Ribosomal protein L10-like"/>
    <property type="match status" value="1"/>
</dbReference>
<dbReference type="PROSITE" id="PS01109">
    <property type="entry name" value="RIBOSOMAL_L10"/>
    <property type="match status" value="1"/>
</dbReference>
<keyword id="KW-1185">Reference proteome</keyword>
<keyword id="KW-0687">Ribonucleoprotein</keyword>
<keyword id="KW-0689">Ribosomal protein</keyword>
<keyword id="KW-0694">RNA-binding</keyword>
<keyword id="KW-0699">rRNA-binding</keyword>
<comment type="function">
    <text evidence="1">Forms part of the ribosomal stalk, playing a central role in the interaction of the ribosome with GTP-bound translation factors.</text>
</comment>
<comment type="subunit">
    <text evidence="1">Part of the ribosomal stalk of the 50S ribosomal subunit. The N-terminus interacts with L11 and the large rRNA to form the base of the stalk. The C-terminus forms an elongated spine to which L12 dimers bind in a sequential fashion forming a multimeric L10(L12)X complex.</text>
</comment>
<comment type="similarity">
    <text evidence="1">Belongs to the universal ribosomal protein uL10 family.</text>
</comment>
<name>RL10_LACP3</name>